<protein>
    <recommendedName>
        <fullName evidence="7">Cytochrome P450 monooxygenase cicH</fullName>
        <ecNumber evidence="9">1.-.-.-</ecNumber>
    </recommendedName>
    <alternativeName>
        <fullName evidence="7">Cichorine biosynthesis cluster protein H</fullName>
    </alternativeName>
</protein>
<comment type="function">
    <text evidence="4 5 9">Cytochrome P450 monooxygenase; part of the gene cluster that mediates the biosynthesis of cichorine, a phytotoxin active against knapweed, corn, and soybeans (PubMed:24244835). The first step in the pathway is performed by the non-reducing polyketide synthase pkbA that condenses one acetyl-CoA starter unit with 3 malonyl-CoA units (PubMed:22510154). PkbA also catalyzes one methylation step to produce 3-methylorsellinate (PubMed:22510154). The nonribosomal peptide synthase-like protein cicB, the cytochrome P450 monooxygenase cicH and the O-methyltransferase cicE are involved in the conversion of 3-methylorsellinate into nidulol (PubMed:24244835). CicB converts 3-methylorsellinate to a yet unidentified intermediate, cicH may play a ring-closing role for cichorine and cicE is plausibly responsible for the methylation of one of the phenol groups (Probable). The oxidoreductase cicC acts downstream with still unidentified enzymes to further convert nidulol into cichorine (PubMed:24244835).</text>
</comment>
<comment type="cofactor">
    <cofactor evidence="1">
        <name>heme</name>
        <dbReference type="ChEBI" id="CHEBI:30413"/>
    </cofactor>
</comment>
<comment type="pathway">
    <text evidence="5">Phytotoxin biosynthesis.</text>
</comment>
<comment type="subcellular location">
    <subcellularLocation>
        <location evidence="2">Membrane</location>
        <topology evidence="2">Single-pass membrane protein</topology>
    </subcellularLocation>
</comment>
<comment type="disruption phenotype">
    <text evidence="5">Abolishes the production of cichorine.</text>
</comment>
<comment type="biotechnology">
    <text evidence="6">Cichorine and its derivatives are promising in the course of developing novel herbicides.</text>
</comment>
<comment type="similarity">
    <text evidence="8">Belongs to the cytochrome P450 family.</text>
</comment>
<comment type="sequence caution" evidence="8">
    <conflict type="erroneous gene model prediction">
        <sequence resource="EMBL-CDS" id="EAA58471"/>
    </conflict>
</comment>
<dbReference type="EC" id="1.-.-.-" evidence="9"/>
<dbReference type="EMBL" id="AACD01000108">
    <property type="protein sequence ID" value="EAA58471.1"/>
    <property type="status" value="ALT_SEQ"/>
    <property type="molecule type" value="Genomic_DNA"/>
</dbReference>
<dbReference type="EMBL" id="BN001301">
    <property type="protein sequence ID" value="CBF69449.1"/>
    <property type="molecule type" value="Genomic_DNA"/>
</dbReference>
<dbReference type="RefSeq" id="XP_664053.1">
    <property type="nucleotide sequence ID" value="XM_658961.1"/>
</dbReference>
<dbReference type="SMR" id="C8V0D4"/>
<dbReference type="GlyCosmos" id="C8V0D4">
    <property type="glycosylation" value="1 site, No reported glycans"/>
</dbReference>
<dbReference type="EnsemblFungi" id="CBF69449">
    <property type="protein sequence ID" value="CBF69449"/>
    <property type="gene ID" value="ANIA_06449"/>
</dbReference>
<dbReference type="VEuPathDB" id="FungiDB:AN6449"/>
<dbReference type="eggNOG" id="KOG0159">
    <property type="taxonomic scope" value="Eukaryota"/>
</dbReference>
<dbReference type="HOGENOM" id="CLU_001570_14_0_1"/>
<dbReference type="InParanoid" id="C8V0D4"/>
<dbReference type="OMA" id="MRVFCEQ"/>
<dbReference type="OrthoDB" id="3934656at2759"/>
<dbReference type="Proteomes" id="UP000000560">
    <property type="component" value="Chromosome I"/>
</dbReference>
<dbReference type="GO" id="GO:0016020">
    <property type="term" value="C:membrane"/>
    <property type="evidence" value="ECO:0007669"/>
    <property type="project" value="UniProtKB-SubCell"/>
</dbReference>
<dbReference type="GO" id="GO:0020037">
    <property type="term" value="F:heme binding"/>
    <property type="evidence" value="ECO:0007669"/>
    <property type="project" value="InterPro"/>
</dbReference>
<dbReference type="GO" id="GO:0005506">
    <property type="term" value="F:iron ion binding"/>
    <property type="evidence" value="ECO:0007669"/>
    <property type="project" value="InterPro"/>
</dbReference>
<dbReference type="GO" id="GO:0004497">
    <property type="term" value="F:monooxygenase activity"/>
    <property type="evidence" value="ECO:0007669"/>
    <property type="project" value="UniProtKB-KW"/>
</dbReference>
<dbReference type="GO" id="GO:0016705">
    <property type="term" value="F:oxidoreductase activity, acting on paired donors, with incorporation or reduction of molecular oxygen"/>
    <property type="evidence" value="ECO:0007669"/>
    <property type="project" value="InterPro"/>
</dbReference>
<dbReference type="GO" id="GO:0062032">
    <property type="term" value="P:cichorine biosynthetic process"/>
    <property type="evidence" value="ECO:0000315"/>
    <property type="project" value="GO_Central"/>
</dbReference>
<dbReference type="GO" id="GO:0044550">
    <property type="term" value="P:secondary metabolite biosynthetic process"/>
    <property type="evidence" value="ECO:0000315"/>
    <property type="project" value="AspGD"/>
</dbReference>
<dbReference type="CDD" id="cd11060">
    <property type="entry name" value="CYP57A1-like"/>
    <property type="match status" value="1"/>
</dbReference>
<dbReference type="FunFam" id="1.10.630.10:FF:000050">
    <property type="entry name" value="Cytochrome P450 monooxygenase"/>
    <property type="match status" value="1"/>
</dbReference>
<dbReference type="Gene3D" id="1.10.630.10">
    <property type="entry name" value="Cytochrome P450"/>
    <property type="match status" value="1"/>
</dbReference>
<dbReference type="InterPro" id="IPR001128">
    <property type="entry name" value="Cyt_P450"/>
</dbReference>
<dbReference type="InterPro" id="IPR017972">
    <property type="entry name" value="Cyt_P450_CS"/>
</dbReference>
<dbReference type="InterPro" id="IPR002403">
    <property type="entry name" value="Cyt_P450_E_grp-IV"/>
</dbReference>
<dbReference type="InterPro" id="IPR036396">
    <property type="entry name" value="Cyt_P450_sf"/>
</dbReference>
<dbReference type="InterPro" id="IPR050121">
    <property type="entry name" value="Cytochrome_P450_monoxygenase"/>
</dbReference>
<dbReference type="PANTHER" id="PTHR24305">
    <property type="entry name" value="CYTOCHROME P450"/>
    <property type="match status" value="1"/>
</dbReference>
<dbReference type="PANTHER" id="PTHR24305:SF235">
    <property type="entry name" value="CYTOCHROME P450 MONOOXYGENASE APDB-RELATED"/>
    <property type="match status" value="1"/>
</dbReference>
<dbReference type="Pfam" id="PF00067">
    <property type="entry name" value="p450"/>
    <property type="match status" value="1"/>
</dbReference>
<dbReference type="PRINTS" id="PR00465">
    <property type="entry name" value="EP450IV"/>
</dbReference>
<dbReference type="PRINTS" id="PR00385">
    <property type="entry name" value="P450"/>
</dbReference>
<dbReference type="SUPFAM" id="SSF48264">
    <property type="entry name" value="Cytochrome P450"/>
    <property type="match status" value="1"/>
</dbReference>
<dbReference type="PROSITE" id="PS00086">
    <property type="entry name" value="CYTOCHROME_P450"/>
    <property type="match status" value="1"/>
</dbReference>
<accession>C8V0D4</accession>
<accession>Q5AZ31</accession>
<evidence type="ECO:0000250" key="1">
    <source>
        <dbReference type="UniProtKB" id="P04798"/>
    </source>
</evidence>
<evidence type="ECO:0000255" key="2"/>
<evidence type="ECO:0000255" key="3">
    <source>
        <dbReference type="PROSITE-ProRule" id="PRU00498"/>
    </source>
</evidence>
<evidence type="ECO:0000269" key="4">
    <source>
    </source>
</evidence>
<evidence type="ECO:0000269" key="5">
    <source>
    </source>
</evidence>
<evidence type="ECO:0000269" key="6">
    <source>
    </source>
</evidence>
<evidence type="ECO:0000303" key="7">
    <source>
    </source>
</evidence>
<evidence type="ECO:0000305" key="8"/>
<evidence type="ECO:0000305" key="9">
    <source>
    </source>
</evidence>
<organism>
    <name type="scientific">Emericella nidulans (strain FGSC A4 / ATCC 38163 / CBS 112.46 / NRRL 194 / M139)</name>
    <name type="common">Aspergillus nidulans</name>
    <dbReference type="NCBI Taxonomy" id="227321"/>
    <lineage>
        <taxon>Eukaryota</taxon>
        <taxon>Fungi</taxon>
        <taxon>Dikarya</taxon>
        <taxon>Ascomycota</taxon>
        <taxon>Pezizomycotina</taxon>
        <taxon>Eurotiomycetes</taxon>
        <taxon>Eurotiomycetidae</taxon>
        <taxon>Eurotiales</taxon>
        <taxon>Aspergillaceae</taxon>
        <taxon>Aspergillus</taxon>
        <taxon>Aspergillus subgen. Nidulantes</taxon>
    </lineage>
</organism>
<sequence>MAILVRLFFALFVVSVYFFRVRLRLSHIPGPFLASLTNINRRQWVTTGRAHTIHTELHRQYGKVVRAGPNTVFVSDPAAIPAIYRFNEPYQKSEFYDALMPYVRGKSIPDVFATRDEHIHRTMKQPIAAIYSMSNLVSFEPYVKSTIEYFFSRLDSLFVETGKVCNFGLWLHLFASDVMGEITFSRRLGFLETGGDMENVMANNWKFFVQAAPATQMPWLDYFWKRNPLLPGSVKPNKVIEFGVARIQERLHLSEKHPDHVNSRDFLSRFIAAKEKNSQIGPDAIMTWANSNIQAGSDTTAILLSALFYHLLKNPTSLAALCTEIDAAAKRGCLSSILTWKETRDLPYLDACVKEAARLHPPISLPLERVIPESGTVIGGFKIPGGTRVAMNPWAVHRDRDVFGADADTWRPERWLEGEEKAKTLYNSLLTFGGGHRSCLGKNISYLEIYKLVPSILLRYEIGLAEPEKEWHLENRWFVMPSRFYVRLKARNGVTKL</sequence>
<keyword id="KW-0325">Glycoprotein</keyword>
<keyword id="KW-0349">Heme</keyword>
<keyword id="KW-0408">Iron</keyword>
<keyword id="KW-0472">Membrane</keyword>
<keyword id="KW-0479">Metal-binding</keyword>
<keyword id="KW-0503">Monooxygenase</keyword>
<keyword id="KW-0560">Oxidoreductase</keyword>
<keyword id="KW-1185">Reference proteome</keyword>
<keyword id="KW-0812">Transmembrane</keyword>
<keyword id="KW-1133">Transmembrane helix</keyword>
<reference key="1">
    <citation type="journal article" date="2005" name="Nature">
        <title>Sequencing of Aspergillus nidulans and comparative analysis with A. fumigatus and A. oryzae.</title>
        <authorList>
            <person name="Galagan J.E."/>
            <person name="Calvo S.E."/>
            <person name="Cuomo C."/>
            <person name="Ma L.-J."/>
            <person name="Wortman J.R."/>
            <person name="Batzoglou S."/>
            <person name="Lee S.-I."/>
            <person name="Bastuerkmen M."/>
            <person name="Spevak C.C."/>
            <person name="Clutterbuck J."/>
            <person name="Kapitonov V."/>
            <person name="Jurka J."/>
            <person name="Scazzocchio C."/>
            <person name="Farman M.L."/>
            <person name="Butler J."/>
            <person name="Purcell S."/>
            <person name="Harris S."/>
            <person name="Braus G.H."/>
            <person name="Draht O."/>
            <person name="Busch S."/>
            <person name="D'Enfert C."/>
            <person name="Bouchier C."/>
            <person name="Goldman G.H."/>
            <person name="Bell-Pedersen D."/>
            <person name="Griffiths-Jones S."/>
            <person name="Doonan J.H."/>
            <person name="Yu J."/>
            <person name="Vienken K."/>
            <person name="Pain A."/>
            <person name="Freitag M."/>
            <person name="Selker E.U."/>
            <person name="Archer D.B."/>
            <person name="Penalva M.A."/>
            <person name="Oakley B.R."/>
            <person name="Momany M."/>
            <person name="Tanaka T."/>
            <person name="Kumagai T."/>
            <person name="Asai K."/>
            <person name="Machida M."/>
            <person name="Nierman W.C."/>
            <person name="Denning D.W."/>
            <person name="Caddick M.X."/>
            <person name="Hynes M."/>
            <person name="Paoletti M."/>
            <person name="Fischer R."/>
            <person name="Miller B.L."/>
            <person name="Dyer P.S."/>
            <person name="Sachs M.S."/>
            <person name="Osmani S.A."/>
            <person name="Birren B.W."/>
        </authorList>
    </citation>
    <scope>NUCLEOTIDE SEQUENCE [LARGE SCALE GENOMIC DNA]</scope>
    <source>
        <strain>FGSC A4 / ATCC 38163 / CBS 112.46 / NRRL 194 / M139</strain>
    </source>
</reference>
<reference key="2">
    <citation type="journal article" date="2009" name="Fungal Genet. Biol.">
        <title>The 2008 update of the Aspergillus nidulans genome annotation: a community effort.</title>
        <authorList>
            <person name="Wortman J.R."/>
            <person name="Gilsenan J.M."/>
            <person name="Joardar V."/>
            <person name="Deegan J."/>
            <person name="Clutterbuck J."/>
            <person name="Andersen M.R."/>
            <person name="Archer D."/>
            <person name="Bencina M."/>
            <person name="Braus G."/>
            <person name="Coutinho P."/>
            <person name="von Dohren H."/>
            <person name="Doonan J."/>
            <person name="Driessen A.J."/>
            <person name="Durek P."/>
            <person name="Espeso E."/>
            <person name="Fekete E."/>
            <person name="Flipphi M."/>
            <person name="Estrada C.G."/>
            <person name="Geysens S."/>
            <person name="Goldman G."/>
            <person name="de Groot P.W."/>
            <person name="Hansen K."/>
            <person name="Harris S.D."/>
            <person name="Heinekamp T."/>
            <person name="Helmstaedt K."/>
            <person name="Henrissat B."/>
            <person name="Hofmann G."/>
            <person name="Homan T."/>
            <person name="Horio T."/>
            <person name="Horiuchi H."/>
            <person name="James S."/>
            <person name="Jones M."/>
            <person name="Karaffa L."/>
            <person name="Karanyi Z."/>
            <person name="Kato M."/>
            <person name="Keller N."/>
            <person name="Kelly D.E."/>
            <person name="Kiel J.A."/>
            <person name="Kim J.M."/>
            <person name="van der Klei I.J."/>
            <person name="Klis F.M."/>
            <person name="Kovalchuk A."/>
            <person name="Krasevec N."/>
            <person name="Kubicek C.P."/>
            <person name="Liu B."/>
            <person name="Maccabe A."/>
            <person name="Meyer V."/>
            <person name="Mirabito P."/>
            <person name="Miskei M."/>
            <person name="Mos M."/>
            <person name="Mullins J."/>
            <person name="Nelson D.R."/>
            <person name="Nielsen J."/>
            <person name="Oakley B.R."/>
            <person name="Osmani S.A."/>
            <person name="Pakula T."/>
            <person name="Paszewski A."/>
            <person name="Paulsen I."/>
            <person name="Pilsyk S."/>
            <person name="Pocsi I."/>
            <person name="Punt P.J."/>
            <person name="Ram A.F."/>
            <person name="Ren Q."/>
            <person name="Robellet X."/>
            <person name="Robson G."/>
            <person name="Seiboth B."/>
            <person name="van Solingen P."/>
            <person name="Specht T."/>
            <person name="Sun J."/>
            <person name="Taheri-Talesh N."/>
            <person name="Takeshita N."/>
            <person name="Ussery D."/>
            <person name="vanKuyk P.A."/>
            <person name="Visser H."/>
            <person name="van de Vondervoort P.J."/>
            <person name="de Vries R.P."/>
            <person name="Walton J."/>
            <person name="Xiang X."/>
            <person name="Xiong Y."/>
            <person name="Zeng A.P."/>
            <person name="Brandt B.W."/>
            <person name="Cornell M.J."/>
            <person name="van den Hondel C.A."/>
            <person name="Visser J."/>
            <person name="Oliver S.G."/>
            <person name="Turner G."/>
        </authorList>
    </citation>
    <scope>GENOME REANNOTATION</scope>
    <source>
        <strain>FGSC A4 / ATCC 38163 / CBS 112.46 / NRRL 194 / M139</strain>
    </source>
</reference>
<reference key="3">
    <citation type="journal article" date="2012" name="J. Am. Chem. Soc.">
        <title>Illuminating the diversity of aromatic polyketide synthases in Aspergillus nidulans.</title>
        <authorList>
            <person name="Ahuja M."/>
            <person name="Chiang Y.M."/>
            <person name="Chang S.L."/>
            <person name="Praseuth M.B."/>
            <person name="Entwistle R."/>
            <person name="Sanchez J.F."/>
            <person name="Lo H.C."/>
            <person name="Yeh H.H."/>
            <person name="Oakley B.R."/>
            <person name="Wang C.C."/>
        </authorList>
    </citation>
    <scope>FUNCTION</scope>
</reference>
<reference key="4">
    <citation type="journal article" date="2012" name="Med. Chem. Commun.">
        <title>Identification and molecular genetic analysis of the cichorine gene cluster in Aspergillus nidulans.</title>
        <authorList>
            <person name="Sanchez J.F."/>
            <person name="Entwistle R."/>
            <person name="Corcoran D."/>
            <person name="Oakley B.R."/>
            <person name="Wang C.C."/>
        </authorList>
    </citation>
    <scope>FUNCTION</scope>
    <scope>DISRUPTION PHENOTYPE</scope>
    <scope>PATHWAY</scope>
</reference>
<reference key="5">
    <citation type="journal article" date="2019" name="Molecules">
        <title>Discovery of three new phytotoxins from the fungus Aspergillus nidulans by pathway inactivation.</title>
        <authorList>
            <person name="Liao L."/>
            <person name="Zhang X."/>
            <person name="Lou Y."/>
            <person name="Zhou C."/>
            <person name="Yuan Q."/>
            <person name="Gao J."/>
        </authorList>
    </citation>
    <scope>BIOTECHNOLOGY</scope>
</reference>
<feature type="chain" id="PRO_0000450887" description="Cytochrome P450 monooxygenase cicH">
    <location>
        <begin position="1"/>
        <end position="497"/>
    </location>
</feature>
<feature type="transmembrane region" description="Helical" evidence="2">
    <location>
        <begin position="2"/>
        <end position="19"/>
    </location>
</feature>
<feature type="binding site" description="axial binding residue" evidence="1">
    <location>
        <position position="439"/>
    </location>
    <ligand>
        <name>heme</name>
        <dbReference type="ChEBI" id="CHEBI:30413"/>
    </ligand>
    <ligandPart>
        <name>Fe</name>
        <dbReference type="ChEBI" id="CHEBI:18248"/>
    </ligandPart>
</feature>
<feature type="glycosylation site" description="N-linked (GlcNAc...) asparagine" evidence="3">
    <location>
        <position position="443"/>
    </location>
</feature>
<proteinExistence type="evidence at protein level"/>
<name>CICH_EMENI</name>
<gene>
    <name evidence="7" type="primary">cicH</name>
    <name type="ORF">AN6449</name>
    <name type="ORF">ANIA_06449</name>
</gene>